<gene>
    <name evidence="1" type="primary">hflD</name>
    <name type="ordered locus">PC1_1868</name>
</gene>
<keyword id="KW-0997">Cell inner membrane</keyword>
<keyword id="KW-1003">Cell membrane</keyword>
<keyword id="KW-0963">Cytoplasm</keyword>
<keyword id="KW-0472">Membrane</keyword>
<protein>
    <recommendedName>
        <fullName evidence="1">High frequency lysogenization protein HflD homolog</fullName>
    </recommendedName>
</protein>
<dbReference type="EMBL" id="CP001657">
    <property type="protein sequence ID" value="ACT12909.1"/>
    <property type="molecule type" value="Genomic_DNA"/>
</dbReference>
<dbReference type="RefSeq" id="WP_015840111.1">
    <property type="nucleotide sequence ID" value="NC_012917.1"/>
</dbReference>
<dbReference type="SMR" id="C6DFW6"/>
<dbReference type="STRING" id="561230.PC1_1868"/>
<dbReference type="KEGG" id="pct:PC1_1868"/>
<dbReference type="eggNOG" id="COG2915">
    <property type="taxonomic scope" value="Bacteria"/>
</dbReference>
<dbReference type="HOGENOM" id="CLU_098920_0_0_6"/>
<dbReference type="OrthoDB" id="9788031at2"/>
<dbReference type="Proteomes" id="UP000002736">
    <property type="component" value="Chromosome"/>
</dbReference>
<dbReference type="GO" id="GO:0005737">
    <property type="term" value="C:cytoplasm"/>
    <property type="evidence" value="ECO:0007669"/>
    <property type="project" value="UniProtKB-SubCell"/>
</dbReference>
<dbReference type="GO" id="GO:0005886">
    <property type="term" value="C:plasma membrane"/>
    <property type="evidence" value="ECO:0007669"/>
    <property type="project" value="UniProtKB-SubCell"/>
</dbReference>
<dbReference type="FunFam" id="1.10.3890.10:FF:000001">
    <property type="entry name" value="High frequency lysogenization protein HflD homolog"/>
    <property type="match status" value="1"/>
</dbReference>
<dbReference type="Gene3D" id="1.10.3890.10">
    <property type="entry name" value="HflD-like"/>
    <property type="match status" value="1"/>
</dbReference>
<dbReference type="HAMAP" id="MF_00695">
    <property type="entry name" value="HflD_protein"/>
    <property type="match status" value="1"/>
</dbReference>
<dbReference type="InterPro" id="IPR007451">
    <property type="entry name" value="HflD"/>
</dbReference>
<dbReference type="InterPro" id="IPR035932">
    <property type="entry name" value="HflD-like_sf"/>
</dbReference>
<dbReference type="NCBIfam" id="NF001246">
    <property type="entry name" value="PRK00218.1-2"/>
    <property type="match status" value="1"/>
</dbReference>
<dbReference type="NCBIfam" id="NF001248">
    <property type="entry name" value="PRK00218.1-4"/>
    <property type="match status" value="1"/>
</dbReference>
<dbReference type="NCBIfam" id="NF001249">
    <property type="entry name" value="PRK00218.1-5"/>
    <property type="match status" value="1"/>
</dbReference>
<dbReference type="PANTHER" id="PTHR38100">
    <property type="entry name" value="HIGH FREQUENCY LYSOGENIZATION PROTEIN HFLD"/>
    <property type="match status" value="1"/>
</dbReference>
<dbReference type="PANTHER" id="PTHR38100:SF1">
    <property type="entry name" value="HIGH FREQUENCY LYSOGENIZATION PROTEIN HFLD"/>
    <property type="match status" value="1"/>
</dbReference>
<dbReference type="Pfam" id="PF04356">
    <property type="entry name" value="DUF489"/>
    <property type="match status" value="1"/>
</dbReference>
<dbReference type="SUPFAM" id="SSF101322">
    <property type="entry name" value="YcfC-like"/>
    <property type="match status" value="1"/>
</dbReference>
<reference key="1">
    <citation type="submission" date="2009-07" db="EMBL/GenBank/DDBJ databases">
        <title>Complete sequence of Pectobacterium carotovorum subsp. carotovorum PC1.</title>
        <authorList>
            <consortium name="US DOE Joint Genome Institute"/>
            <person name="Lucas S."/>
            <person name="Copeland A."/>
            <person name="Lapidus A."/>
            <person name="Glavina del Rio T."/>
            <person name="Tice H."/>
            <person name="Bruce D."/>
            <person name="Goodwin L."/>
            <person name="Pitluck S."/>
            <person name="Munk A.C."/>
            <person name="Brettin T."/>
            <person name="Detter J.C."/>
            <person name="Han C."/>
            <person name="Tapia R."/>
            <person name="Larimer F."/>
            <person name="Land M."/>
            <person name="Hauser L."/>
            <person name="Kyrpides N."/>
            <person name="Mikhailova N."/>
            <person name="Balakrishnan V."/>
            <person name="Glasner J."/>
            <person name="Perna N.T."/>
        </authorList>
    </citation>
    <scope>NUCLEOTIDE SEQUENCE [LARGE SCALE GENOMIC DNA]</scope>
    <source>
        <strain>PC1</strain>
    </source>
</reference>
<accession>C6DFW6</accession>
<evidence type="ECO:0000255" key="1">
    <source>
        <dbReference type="HAMAP-Rule" id="MF_00695"/>
    </source>
</evidence>
<feature type="chain" id="PRO_1000212628" description="High frequency lysogenization protein HflD homolog">
    <location>
        <begin position="1"/>
        <end position="212"/>
    </location>
</feature>
<name>HFLD_PECCP</name>
<sequence>MAKNYYEITLALAGICQSAHVVQQLAHTGHCNNDVLHTSLNSVLNLNPSSTLAVYGNDEQNLKVGLETLLGILNTSSNKGAGAELSRYAFSLIALERKLKAKPAALDELGKRIGQLERQLEHFDLLSETIVSALAAIYVDVISTLGPRIQVTGSPEVLKNSQVQAKVRSALLAGIRSAVLWQQIGGGRLQLMFSRGQLVKEAKQILARCPSV</sequence>
<organism>
    <name type="scientific">Pectobacterium carotovorum subsp. carotovorum (strain PC1)</name>
    <dbReference type="NCBI Taxonomy" id="561230"/>
    <lineage>
        <taxon>Bacteria</taxon>
        <taxon>Pseudomonadati</taxon>
        <taxon>Pseudomonadota</taxon>
        <taxon>Gammaproteobacteria</taxon>
        <taxon>Enterobacterales</taxon>
        <taxon>Pectobacteriaceae</taxon>
        <taxon>Pectobacterium</taxon>
    </lineage>
</organism>
<comment type="subcellular location">
    <subcellularLocation>
        <location>Cytoplasm</location>
    </subcellularLocation>
    <subcellularLocation>
        <location evidence="1">Cell inner membrane</location>
        <topology evidence="1">Peripheral membrane protein</topology>
        <orientation evidence="1">Cytoplasmic side</orientation>
    </subcellularLocation>
</comment>
<comment type="similarity">
    <text evidence="1">Belongs to the HflD family.</text>
</comment>
<proteinExistence type="inferred from homology"/>